<comment type="function">
    <text evidence="1">Binds directly to 23S rRNA. The L1 stalk is quite mobile in the ribosome, and is involved in E site tRNA release.</text>
</comment>
<comment type="function">
    <text evidence="1">Protein L1 is also a translational repressor protein, it controls the translation of the L11 operon by binding to its mRNA.</text>
</comment>
<comment type="subunit">
    <text evidence="1">Part of the 50S ribosomal subunit.</text>
</comment>
<comment type="similarity">
    <text evidence="1">Belongs to the universal ribosomal protein uL1 family.</text>
</comment>
<feature type="chain" id="PRO_0000230647" description="Large ribosomal subunit protein uL1">
    <location>
        <begin position="1"/>
        <end position="231"/>
    </location>
</feature>
<dbReference type="EMBL" id="CP000116">
    <property type="protein sequence ID" value="AAZ96348.1"/>
    <property type="molecule type" value="Genomic_DNA"/>
</dbReference>
<dbReference type="RefSeq" id="WP_011310908.1">
    <property type="nucleotide sequence ID" value="NC_007404.1"/>
</dbReference>
<dbReference type="SMR" id="Q3SLQ9"/>
<dbReference type="STRING" id="292415.Tbd_0395"/>
<dbReference type="KEGG" id="tbd:Tbd_0395"/>
<dbReference type="eggNOG" id="COG0081">
    <property type="taxonomic scope" value="Bacteria"/>
</dbReference>
<dbReference type="HOGENOM" id="CLU_062853_0_0_4"/>
<dbReference type="OrthoDB" id="9803740at2"/>
<dbReference type="Proteomes" id="UP000008291">
    <property type="component" value="Chromosome"/>
</dbReference>
<dbReference type="GO" id="GO:0022625">
    <property type="term" value="C:cytosolic large ribosomal subunit"/>
    <property type="evidence" value="ECO:0007669"/>
    <property type="project" value="TreeGrafter"/>
</dbReference>
<dbReference type="GO" id="GO:0019843">
    <property type="term" value="F:rRNA binding"/>
    <property type="evidence" value="ECO:0007669"/>
    <property type="project" value="UniProtKB-UniRule"/>
</dbReference>
<dbReference type="GO" id="GO:0003735">
    <property type="term" value="F:structural constituent of ribosome"/>
    <property type="evidence" value="ECO:0007669"/>
    <property type="project" value="InterPro"/>
</dbReference>
<dbReference type="GO" id="GO:0000049">
    <property type="term" value="F:tRNA binding"/>
    <property type="evidence" value="ECO:0007669"/>
    <property type="project" value="UniProtKB-KW"/>
</dbReference>
<dbReference type="GO" id="GO:0006417">
    <property type="term" value="P:regulation of translation"/>
    <property type="evidence" value="ECO:0007669"/>
    <property type="project" value="UniProtKB-KW"/>
</dbReference>
<dbReference type="GO" id="GO:0006412">
    <property type="term" value="P:translation"/>
    <property type="evidence" value="ECO:0007669"/>
    <property type="project" value="UniProtKB-UniRule"/>
</dbReference>
<dbReference type="CDD" id="cd00403">
    <property type="entry name" value="Ribosomal_L1"/>
    <property type="match status" value="1"/>
</dbReference>
<dbReference type="FunFam" id="3.40.50.790:FF:000001">
    <property type="entry name" value="50S ribosomal protein L1"/>
    <property type="match status" value="1"/>
</dbReference>
<dbReference type="Gene3D" id="3.30.190.20">
    <property type="match status" value="1"/>
</dbReference>
<dbReference type="Gene3D" id="3.40.50.790">
    <property type="match status" value="1"/>
</dbReference>
<dbReference type="HAMAP" id="MF_01318_B">
    <property type="entry name" value="Ribosomal_uL1_B"/>
    <property type="match status" value="1"/>
</dbReference>
<dbReference type="InterPro" id="IPR005878">
    <property type="entry name" value="Ribosom_uL1_bac-type"/>
</dbReference>
<dbReference type="InterPro" id="IPR002143">
    <property type="entry name" value="Ribosomal_uL1"/>
</dbReference>
<dbReference type="InterPro" id="IPR023674">
    <property type="entry name" value="Ribosomal_uL1-like"/>
</dbReference>
<dbReference type="InterPro" id="IPR028364">
    <property type="entry name" value="Ribosomal_uL1/biogenesis"/>
</dbReference>
<dbReference type="InterPro" id="IPR016095">
    <property type="entry name" value="Ribosomal_uL1_3-a/b-sand"/>
</dbReference>
<dbReference type="InterPro" id="IPR023673">
    <property type="entry name" value="Ribosomal_uL1_CS"/>
</dbReference>
<dbReference type="NCBIfam" id="TIGR01169">
    <property type="entry name" value="rplA_bact"/>
    <property type="match status" value="1"/>
</dbReference>
<dbReference type="PANTHER" id="PTHR36427">
    <property type="entry name" value="54S RIBOSOMAL PROTEIN L1, MITOCHONDRIAL"/>
    <property type="match status" value="1"/>
</dbReference>
<dbReference type="PANTHER" id="PTHR36427:SF3">
    <property type="entry name" value="LARGE RIBOSOMAL SUBUNIT PROTEIN UL1M"/>
    <property type="match status" value="1"/>
</dbReference>
<dbReference type="Pfam" id="PF00687">
    <property type="entry name" value="Ribosomal_L1"/>
    <property type="match status" value="1"/>
</dbReference>
<dbReference type="PIRSF" id="PIRSF002155">
    <property type="entry name" value="Ribosomal_L1"/>
    <property type="match status" value="1"/>
</dbReference>
<dbReference type="SUPFAM" id="SSF56808">
    <property type="entry name" value="Ribosomal protein L1"/>
    <property type="match status" value="1"/>
</dbReference>
<dbReference type="PROSITE" id="PS01199">
    <property type="entry name" value="RIBOSOMAL_L1"/>
    <property type="match status" value="1"/>
</dbReference>
<organism>
    <name type="scientific">Thiobacillus denitrificans (strain ATCC 25259 / T1)</name>
    <dbReference type="NCBI Taxonomy" id="292415"/>
    <lineage>
        <taxon>Bacteria</taxon>
        <taxon>Pseudomonadati</taxon>
        <taxon>Pseudomonadota</taxon>
        <taxon>Betaproteobacteria</taxon>
        <taxon>Nitrosomonadales</taxon>
        <taxon>Thiobacillaceae</taxon>
        <taxon>Thiobacillus</taxon>
    </lineage>
</organism>
<gene>
    <name evidence="1" type="primary">rplA</name>
    <name type="ordered locus">Tbd_0395</name>
</gene>
<sequence>MANVSKRLRALKEKIDRSRNYPVVDALQLVKDSATAKFDESIDVAVNLGVDARKSDQMVRGAVVLPKGIGKTVRVAVFAQGDNAQKARDAGADIVGFDDLAADIKAGKMDFDVVIATPDAMRVVGQLGQILGPRGLMPNPKVGTVSPDVVGAVKNAKAGQVQYRTDKGGIVHCTIGRASFSVDDLKENLVALLDALQRAKPASSKGIYFKRLSVSSTMGVGVRVDQGSVAA</sequence>
<keyword id="KW-1185">Reference proteome</keyword>
<keyword id="KW-0678">Repressor</keyword>
<keyword id="KW-0687">Ribonucleoprotein</keyword>
<keyword id="KW-0689">Ribosomal protein</keyword>
<keyword id="KW-0694">RNA-binding</keyword>
<keyword id="KW-0699">rRNA-binding</keyword>
<keyword id="KW-0810">Translation regulation</keyword>
<keyword id="KW-0820">tRNA-binding</keyword>
<protein>
    <recommendedName>
        <fullName evidence="1">Large ribosomal subunit protein uL1</fullName>
    </recommendedName>
    <alternativeName>
        <fullName evidence="2">50S ribosomal protein L1</fullName>
    </alternativeName>
</protein>
<proteinExistence type="inferred from homology"/>
<reference key="1">
    <citation type="journal article" date="2006" name="J. Bacteriol.">
        <title>The genome sequence of the obligately chemolithoautotrophic, facultatively anaerobic bacterium Thiobacillus denitrificans.</title>
        <authorList>
            <person name="Beller H.R."/>
            <person name="Chain P.S."/>
            <person name="Letain T.E."/>
            <person name="Chakicherla A."/>
            <person name="Larimer F.W."/>
            <person name="Richardson P.M."/>
            <person name="Coleman M.A."/>
            <person name="Wood A.P."/>
            <person name="Kelly D.P."/>
        </authorList>
    </citation>
    <scope>NUCLEOTIDE SEQUENCE [LARGE SCALE GENOMIC DNA]</scope>
    <source>
        <strain>ATCC 25259 / T1</strain>
    </source>
</reference>
<accession>Q3SLQ9</accession>
<name>RL1_THIDA</name>
<evidence type="ECO:0000255" key="1">
    <source>
        <dbReference type="HAMAP-Rule" id="MF_01318"/>
    </source>
</evidence>
<evidence type="ECO:0000305" key="2"/>